<evidence type="ECO:0000255" key="1">
    <source>
        <dbReference type="HAMAP-Rule" id="MF_00073"/>
    </source>
</evidence>
<gene>
    <name evidence="1" type="primary">nusB</name>
    <name type="ordered locus">Gura_2179</name>
</gene>
<name>NUSB_GEOUR</name>
<sequence length="145" mass="16102">MSSRREGRELALQALYSSDVEVMDGTTVLKRIMENFGDGSEPAVDAHSRSFSFAAELVNGVVANRAAIDQRIEEKSKNWSISRMARVDLNILRLAVFELFYRPDIPKNVTINEAIEVAKKFGADDSPAFINGILDEIASLLPDKE</sequence>
<proteinExistence type="inferred from homology"/>
<accession>A5G3J8</accession>
<organism>
    <name type="scientific">Geotalea uraniireducens (strain Rf4)</name>
    <name type="common">Geobacter uraniireducens</name>
    <dbReference type="NCBI Taxonomy" id="351605"/>
    <lineage>
        <taxon>Bacteria</taxon>
        <taxon>Pseudomonadati</taxon>
        <taxon>Thermodesulfobacteriota</taxon>
        <taxon>Desulfuromonadia</taxon>
        <taxon>Geobacterales</taxon>
        <taxon>Geobacteraceae</taxon>
        <taxon>Geotalea</taxon>
    </lineage>
</organism>
<feature type="chain" id="PRO_1000075188" description="Transcription antitermination protein NusB">
    <location>
        <begin position="1"/>
        <end position="145"/>
    </location>
</feature>
<protein>
    <recommendedName>
        <fullName evidence="1">Transcription antitermination protein NusB</fullName>
    </recommendedName>
    <alternativeName>
        <fullName evidence="1">Antitermination factor NusB</fullName>
    </alternativeName>
</protein>
<dbReference type="EMBL" id="CP000698">
    <property type="protein sequence ID" value="ABQ26366.1"/>
    <property type="molecule type" value="Genomic_DNA"/>
</dbReference>
<dbReference type="RefSeq" id="WP_011939065.1">
    <property type="nucleotide sequence ID" value="NC_009483.1"/>
</dbReference>
<dbReference type="SMR" id="A5G3J8"/>
<dbReference type="STRING" id="351605.Gura_2179"/>
<dbReference type="KEGG" id="gur:Gura_2179"/>
<dbReference type="HOGENOM" id="CLU_087843_3_3_7"/>
<dbReference type="OrthoDB" id="9797817at2"/>
<dbReference type="Proteomes" id="UP000006695">
    <property type="component" value="Chromosome"/>
</dbReference>
<dbReference type="GO" id="GO:0005829">
    <property type="term" value="C:cytosol"/>
    <property type="evidence" value="ECO:0007669"/>
    <property type="project" value="TreeGrafter"/>
</dbReference>
<dbReference type="GO" id="GO:0003723">
    <property type="term" value="F:RNA binding"/>
    <property type="evidence" value="ECO:0007669"/>
    <property type="project" value="UniProtKB-UniRule"/>
</dbReference>
<dbReference type="GO" id="GO:0006353">
    <property type="term" value="P:DNA-templated transcription termination"/>
    <property type="evidence" value="ECO:0007669"/>
    <property type="project" value="UniProtKB-UniRule"/>
</dbReference>
<dbReference type="GO" id="GO:0031564">
    <property type="term" value="P:transcription antitermination"/>
    <property type="evidence" value="ECO:0007669"/>
    <property type="project" value="UniProtKB-KW"/>
</dbReference>
<dbReference type="CDD" id="cd00619">
    <property type="entry name" value="Terminator_NusB"/>
    <property type="match status" value="1"/>
</dbReference>
<dbReference type="Gene3D" id="1.10.940.10">
    <property type="entry name" value="NusB-like"/>
    <property type="match status" value="1"/>
</dbReference>
<dbReference type="HAMAP" id="MF_00073">
    <property type="entry name" value="NusB"/>
    <property type="match status" value="1"/>
</dbReference>
<dbReference type="InterPro" id="IPR035926">
    <property type="entry name" value="NusB-like_sf"/>
</dbReference>
<dbReference type="InterPro" id="IPR011605">
    <property type="entry name" value="NusB_fam"/>
</dbReference>
<dbReference type="InterPro" id="IPR006027">
    <property type="entry name" value="NusB_RsmB_TIM44"/>
</dbReference>
<dbReference type="NCBIfam" id="TIGR01951">
    <property type="entry name" value="nusB"/>
    <property type="match status" value="1"/>
</dbReference>
<dbReference type="PANTHER" id="PTHR11078:SF3">
    <property type="entry name" value="ANTITERMINATION NUSB DOMAIN-CONTAINING PROTEIN"/>
    <property type="match status" value="1"/>
</dbReference>
<dbReference type="PANTHER" id="PTHR11078">
    <property type="entry name" value="N UTILIZATION SUBSTANCE PROTEIN B-RELATED"/>
    <property type="match status" value="1"/>
</dbReference>
<dbReference type="Pfam" id="PF01029">
    <property type="entry name" value="NusB"/>
    <property type="match status" value="1"/>
</dbReference>
<dbReference type="SUPFAM" id="SSF48013">
    <property type="entry name" value="NusB-like"/>
    <property type="match status" value="1"/>
</dbReference>
<reference key="1">
    <citation type="submission" date="2007-05" db="EMBL/GenBank/DDBJ databases">
        <title>Complete sequence of Geobacter uraniireducens Rf4.</title>
        <authorList>
            <consortium name="US DOE Joint Genome Institute"/>
            <person name="Copeland A."/>
            <person name="Lucas S."/>
            <person name="Lapidus A."/>
            <person name="Barry K."/>
            <person name="Detter J.C."/>
            <person name="Glavina del Rio T."/>
            <person name="Hammon N."/>
            <person name="Israni S."/>
            <person name="Dalin E."/>
            <person name="Tice H."/>
            <person name="Pitluck S."/>
            <person name="Chertkov O."/>
            <person name="Brettin T."/>
            <person name="Bruce D."/>
            <person name="Han C."/>
            <person name="Schmutz J."/>
            <person name="Larimer F."/>
            <person name="Land M."/>
            <person name="Hauser L."/>
            <person name="Kyrpides N."/>
            <person name="Mikhailova N."/>
            <person name="Shelobolina E."/>
            <person name="Aklujkar M."/>
            <person name="Lovley D."/>
            <person name="Richardson P."/>
        </authorList>
    </citation>
    <scope>NUCLEOTIDE SEQUENCE [LARGE SCALE GENOMIC DNA]</scope>
    <source>
        <strain>ATCC BAA-1134 / JCM 13001 / Rf4</strain>
    </source>
</reference>
<keyword id="KW-1185">Reference proteome</keyword>
<keyword id="KW-0694">RNA-binding</keyword>
<keyword id="KW-0804">Transcription</keyword>
<keyword id="KW-0889">Transcription antitermination</keyword>
<keyword id="KW-0805">Transcription regulation</keyword>
<comment type="function">
    <text evidence="1">Involved in transcription antitermination. Required for transcription of ribosomal RNA (rRNA) genes. Binds specifically to the boxA antiterminator sequence of the ribosomal RNA (rrn) operons.</text>
</comment>
<comment type="similarity">
    <text evidence="1">Belongs to the NusB family.</text>
</comment>